<gene>
    <name type="primary">sds23</name>
    <name type="ORF">NFIA_018020</name>
</gene>
<accession>A1D3V8</accession>
<keyword id="KW-0129">CBS domain</keyword>
<keyword id="KW-0963">Cytoplasm</keyword>
<keyword id="KW-0539">Nucleus</keyword>
<keyword id="KW-1185">Reference proteome</keyword>
<keyword id="KW-0677">Repeat</keyword>
<proteinExistence type="inferred from homology"/>
<evidence type="ECO:0000250" key="1"/>
<evidence type="ECO:0000255" key="2">
    <source>
        <dbReference type="PROSITE-ProRule" id="PRU00703"/>
    </source>
</evidence>
<evidence type="ECO:0000256" key="3">
    <source>
        <dbReference type="SAM" id="MobiDB-lite"/>
    </source>
</evidence>
<evidence type="ECO:0000305" key="4"/>
<organism>
    <name type="scientific">Neosartorya fischeri (strain ATCC 1020 / DSM 3700 / CBS 544.65 / FGSC A1164 / JCM 1740 / NRRL 181 / WB 181)</name>
    <name type="common">Aspergillus fischerianus</name>
    <dbReference type="NCBI Taxonomy" id="331117"/>
    <lineage>
        <taxon>Eukaryota</taxon>
        <taxon>Fungi</taxon>
        <taxon>Dikarya</taxon>
        <taxon>Ascomycota</taxon>
        <taxon>Pezizomycotina</taxon>
        <taxon>Eurotiomycetes</taxon>
        <taxon>Eurotiomycetidae</taxon>
        <taxon>Eurotiales</taxon>
        <taxon>Aspergillaceae</taxon>
        <taxon>Aspergillus</taxon>
        <taxon>Aspergillus subgen. Fumigati</taxon>
    </lineage>
</organism>
<name>SDS23_NEOFI</name>
<reference key="1">
    <citation type="journal article" date="2008" name="PLoS Genet.">
        <title>Genomic islands in the pathogenic filamentous fungus Aspergillus fumigatus.</title>
        <authorList>
            <person name="Fedorova N.D."/>
            <person name="Khaldi N."/>
            <person name="Joardar V.S."/>
            <person name="Maiti R."/>
            <person name="Amedeo P."/>
            <person name="Anderson M.J."/>
            <person name="Crabtree J."/>
            <person name="Silva J.C."/>
            <person name="Badger J.H."/>
            <person name="Albarraq A."/>
            <person name="Angiuoli S."/>
            <person name="Bussey H."/>
            <person name="Bowyer P."/>
            <person name="Cotty P.J."/>
            <person name="Dyer P.S."/>
            <person name="Egan A."/>
            <person name="Galens K."/>
            <person name="Fraser-Liggett C.M."/>
            <person name="Haas B.J."/>
            <person name="Inman J.M."/>
            <person name="Kent R."/>
            <person name="Lemieux S."/>
            <person name="Malavazi I."/>
            <person name="Orvis J."/>
            <person name="Roemer T."/>
            <person name="Ronning C.M."/>
            <person name="Sundaram J.P."/>
            <person name="Sutton G."/>
            <person name="Turner G."/>
            <person name="Venter J.C."/>
            <person name="White O.R."/>
            <person name="Whitty B.R."/>
            <person name="Youngman P."/>
            <person name="Wolfe K.H."/>
            <person name="Goldman G.H."/>
            <person name="Wortman J.R."/>
            <person name="Jiang B."/>
            <person name="Denning D.W."/>
            <person name="Nierman W.C."/>
        </authorList>
    </citation>
    <scope>NUCLEOTIDE SEQUENCE [LARGE SCALE GENOMIC DNA]</scope>
    <source>
        <strain>ATCC 1020 / DSM 3700 / CBS 544.65 / FGSC A1164 / JCM 1740 / NRRL 181 / WB 181</strain>
    </source>
</reference>
<comment type="function">
    <text evidence="1">Involved in DNA replication and cell separation.</text>
</comment>
<comment type="subcellular location">
    <subcellularLocation>
        <location evidence="1">Cytoplasm</location>
    </subcellularLocation>
    <subcellularLocation>
        <location evidence="1">Nucleus</location>
    </subcellularLocation>
</comment>
<comment type="similarity">
    <text evidence="4">Belongs to the SDS23 family.</text>
</comment>
<feature type="chain" id="PRO_0000324955" description="Protein sds23">
    <location>
        <begin position="1"/>
        <end position="538"/>
    </location>
</feature>
<feature type="domain" description="CBS 1" evidence="2">
    <location>
        <begin position="106"/>
        <end position="171"/>
    </location>
</feature>
<feature type="domain" description="CBS 2" evidence="2">
    <location>
        <begin position="197"/>
        <end position="256"/>
    </location>
</feature>
<feature type="domain" description="CBS 3" evidence="2">
    <location>
        <begin position="274"/>
        <end position="331"/>
    </location>
</feature>
<feature type="domain" description="CBS 4" evidence="2">
    <location>
        <begin position="360"/>
        <end position="419"/>
    </location>
</feature>
<feature type="region of interest" description="Disordered" evidence="3">
    <location>
        <begin position="1"/>
        <end position="69"/>
    </location>
</feature>
<feature type="region of interest" description="Disordered" evidence="3">
    <location>
        <begin position="386"/>
        <end position="448"/>
    </location>
</feature>
<feature type="region of interest" description="Disordered" evidence="3">
    <location>
        <begin position="500"/>
        <end position="538"/>
    </location>
</feature>
<feature type="compositionally biased region" description="Low complexity" evidence="3">
    <location>
        <begin position="21"/>
        <end position="40"/>
    </location>
</feature>
<feature type="compositionally biased region" description="Low complexity" evidence="3">
    <location>
        <begin position="422"/>
        <end position="432"/>
    </location>
</feature>
<feature type="compositionally biased region" description="Basic and acidic residues" evidence="3">
    <location>
        <begin position="525"/>
        <end position="538"/>
    </location>
</feature>
<protein>
    <recommendedName>
        <fullName>Protein sds23</fullName>
    </recommendedName>
</protein>
<dbReference type="EMBL" id="DS027688">
    <property type="protein sequence ID" value="EAW23101.1"/>
    <property type="molecule type" value="Genomic_DNA"/>
</dbReference>
<dbReference type="RefSeq" id="XP_001264998.1">
    <property type="nucleotide sequence ID" value="XM_001264997.1"/>
</dbReference>
<dbReference type="SMR" id="A1D3V8"/>
<dbReference type="STRING" id="331117.A1D3V8"/>
<dbReference type="EnsemblFungi" id="EAW23101">
    <property type="protein sequence ID" value="EAW23101"/>
    <property type="gene ID" value="NFIA_018020"/>
</dbReference>
<dbReference type="GeneID" id="4591320"/>
<dbReference type="KEGG" id="nfi:NFIA_018020"/>
<dbReference type="VEuPathDB" id="FungiDB:NFIA_018020"/>
<dbReference type="eggNOG" id="KOG1764">
    <property type="taxonomic scope" value="Eukaryota"/>
</dbReference>
<dbReference type="HOGENOM" id="CLU_024459_0_0_1"/>
<dbReference type="OMA" id="DWTQISI"/>
<dbReference type="OrthoDB" id="449052at2759"/>
<dbReference type="Proteomes" id="UP000006702">
    <property type="component" value="Unassembled WGS sequence"/>
</dbReference>
<dbReference type="GO" id="GO:0005737">
    <property type="term" value="C:cytoplasm"/>
    <property type="evidence" value="ECO:0007669"/>
    <property type="project" value="UniProtKB-SubCell"/>
</dbReference>
<dbReference type="GO" id="GO:0005634">
    <property type="term" value="C:nucleus"/>
    <property type="evidence" value="ECO:0007669"/>
    <property type="project" value="UniProtKB-SubCell"/>
</dbReference>
<dbReference type="GO" id="GO:0004865">
    <property type="term" value="F:protein serine/threonine phosphatase inhibitor activity"/>
    <property type="evidence" value="ECO:0007669"/>
    <property type="project" value="TreeGrafter"/>
</dbReference>
<dbReference type="GO" id="GO:0042149">
    <property type="term" value="P:cellular response to glucose starvation"/>
    <property type="evidence" value="ECO:0007669"/>
    <property type="project" value="InterPro"/>
</dbReference>
<dbReference type="GO" id="GO:0030071">
    <property type="term" value="P:regulation of mitotic metaphase/anaphase transition"/>
    <property type="evidence" value="ECO:0007669"/>
    <property type="project" value="InterPro"/>
</dbReference>
<dbReference type="CDD" id="cd02205">
    <property type="entry name" value="CBS_pair_SF"/>
    <property type="match status" value="2"/>
</dbReference>
<dbReference type="Gene3D" id="3.10.580.10">
    <property type="entry name" value="CBS-domain"/>
    <property type="match status" value="2"/>
</dbReference>
<dbReference type="InterPro" id="IPR050511">
    <property type="entry name" value="AMPK_gamma/SDS23_families"/>
</dbReference>
<dbReference type="InterPro" id="IPR000644">
    <property type="entry name" value="CBS_dom"/>
</dbReference>
<dbReference type="InterPro" id="IPR046342">
    <property type="entry name" value="CBS_dom_sf"/>
</dbReference>
<dbReference type="InterPro" id="IPR016711">
    <property type="entry name" value="Ssd23"/>
</dbReference>
<dbReference type="PANTHER" id="PTHR13780">
    <property type="entry name" value="AMP-ACTIVATED PROTEIN KINASE, GAMMA REGULATORY SUBUNIT"/>
    <property type="match status" value="1"/>
</dbReference>
<dbReference type="PANTHER" id="PTHR13780:SF36">
    <property type="entry name" value="CBS DOMAIN-CONTAINING PROTEIN"/>
    <property type="match status" value="1"/>
</dbReference>
<dbReference type="Pfam" id="PF00571">
    <property type="entry name" value="CBS"/>
    <property type="match status" value="2"/>
</dbReference>
<dbReference type="PIRSF" id="PIRSF018148">
    <property type="entry name" value="UCP018148_CBS_YBR214w"/>
    <property type="match status" value="1"/>
</dbReference>
<dbReference type="SMART" id="SM00116">
    <property type="entry name" value="CBS"/>
    <property type="match status" value="3"/>
</dbReference>
<dbReference type="SUPFAM" id="SSF54631">
    <property type="entry name" value="CBS-domain pair"/>
    <property type="match status" value="2"/>
</dbReference>
<dbReference type="PROSITE" id="PS51371">
    <property type="entry name" value="CBS"/>
    <property type="match status" value="3"/>
</dbReference>
<sequence>MADLQNLEAVADHPNGSAIASPRSSTDSRSPSTRSQSLRLNHSNHQHRQSFSESLRAAPGSPRTRRQPSFTQAAIQSLIDNPPAPKDVNPAFAGRDWREISIGELVRPDDLRFVELDTGIEEATNTLIDSDAPVLLIRETPEHKTAVGTFDYSDLNAYLLLAAGLTQPNEELRESYEELARKARDEHKIPLKDVKELSRSEPLTTLPASANLMTAVETFGGGVHRVVVVDEHNNGEVVGIVSQFRLVKFLWENGRSFPVIDQLYPQYLRDLGIGSREVISINGDKQLCEALQIMNSEGISSIAVVDNHSNVVGNISTTDVKLLTRSSSLPLLHNTCIHFISVILSARGLIEGKDSFPVFYVNPSSTLAHTVAKMVATKSHRLWVTDPLSPSSSGPPTPSHSSVQLPLAASTNSTQSPPVSPPATTTNLPAPNYSTPHLPSPPQPFMNAASLTHPAASVGMPHGVAPSIPASALPGARLSGRLVGVVSLTDILNLHARASGLSPADPAESRSRRRRSSSSSVSVRKSGDIGRELFSRRD</sequence>